<keyword id="KW-0067">ATP-binding</keyword>
<keyword id="KW-0325">Glycoprotein</keyword>
<keyword id="KW-0472">Membrane</keyword>
<keyword id="KW-0547">Nucleotide-binding</keyword>
<keyword id="KW-1185">Reference proteome</keyword>
<keyword id="KW-0677">Repeat</keyword>
<keyword id="KW-0812">Transmembrane</keyword>
<keyword id="KW-1133">Transmembrane helix</keyword>
<keyword id="KW-0813">Transport</keyword>
<feature type="chain" id="PRO_0000227924" description="ABC transporter B family member 15">
    <location>
        <begin position="1"/>
        <end position="1240"/>
    </location>
</feature>
<feature type="transmembrane region" description="Helical" evidence="3">
    <location>
        <begin position="35"/>
        <end position="55"/>
    </location>
</feature>
<feature type="transmembrane region" description="Helical" evidence="3">
    <location>
        <begin position="82"/>
        <end position="102"/>
    </location>
</feature>
<feature type="transmembrane region" description="Helical" evidence="3">
    <location>
        <begin position="158"/>
        <end position="180"/>
    </location>
</feature>
<feature type="transmembrane region" description="Helical" evidence="3">
    <location>
        <begin position="184"/>
        <end position="206"/>
    </location>
</feature>
<feature type="transmembrane region" description="Helical" evidence="3">
    <location>
        <begin position="264"/>
        <end position="284"/>
    </location>
</feature>
<feature type="transmembrane region" description="Helical" evidence="3">
    <location>
        <begin position="296"/>
        <end position="316"/>
    </location>
</feature>
<feature type="transmembrane region" description="Helical" evidence="3">
    <location>
        <begin position="681"/>
        <end position="701"/>
    </location>
</feature>
<feature type="transmembrane region" description="Helical" evidence="3">
    <location>
        <begin position="714"/>
        <end position="734"/>
    </location>
</feature>
<feature type="transmembrane region" description="Helical" evidence="3">
    <location>
        <begin position="794"/>
        <end position="813"/>
    </location>
</feature>
<feature type="transmembrane region" description="Helical" evidence="3">
    <location>
        <begin position="817"/>
        <end position="839"/>
    </location>
</feature>
<feature type="transmembrane region" description="Helical" evidence="3">
    <location>
        <begin position="895"/>
        <end position="915"/>
    </location>
</feature>
<feature type="transmembrane region" description="Helical" evidence="3">
    <location>
        <begin position="923"/>
        <end position="943"/>
    </location>
</feature>
<feature type="domain" description="ABC transmembrane type-1 1" evidence="3">
    <location>
        <begin position="35"/>
        <end position="324"/>
    </location>
</feature>
<feature type="domain" description="ABC transporter 1" evidence="2">
    <location>
        <begin position="359"/>
        <end position="595"/>
    </location>
</feature>
<feature type="domain" description="ABC transmembrane type-1 2" evidence="3">
    <location>
        <begin position="672"/>
        <end position="960"/>
    </location>
</feature>
<feature type="domain" description="ABC transporter 2" evidence="2">
    <location>
        <begin position="995"/>
        <end position="1233"/>
    </location>
</feature>
<feature type="region of interest" description="Disordered" evidence="4">
    <location>
        <begin position="617"/>
        <end position="646"/>
    </location>
</feature>
<feature type="compositionally biased region" description="Low complexity" evidence="4">
    <location>
        <begin position="623"/>
        <end position="639"/>
    </location>
</feature>
<feature type="binding site" evidence="2">
    <location>
        <begin position="394"/>
        <end position="401"/>
    </location>
    <ligand>
        <name>ATP</name>
        <dbReference type="ChEBI" id="CHEBI:30616"/>
        <label>1</label>
    </ligand>
</feature>
<feature type="binding site" evidence="2">
    <location>
        <begin position="1030"/>
        <end position="1037"/>
    </location>
    <ligand>
        <name>ATP</name>
        <dbReference type="ChEBI" id="CHEBI:30616"/>
        <label>2</label>
    </ligand>
</feature>
<feature type="glycosylation site" description="N-linked (GlcNAc...) asparagine" evidence="1">
    <location>
        <position position="542"/>
    </location>
</feature>
<feature type="glycosylation site" description="N-linked (GlcNAc...) asparagine" evidence="1">
    <location>
        <position position="605"/>
    </location>
</feature>
<feature type="glycosylation site" description="N-linked (GlcNAc...) asparagine" evidence="1">
    <location>
        <position position="622"/>
    </location>
</feature>
<feature type="glycosylation site" description="N-linked (GlcNAc...) asparagine" evidence="1">
    <location>
        <position position="646"/>
    </location>
</feature>
<feature type="glycosylation site" description="N-linked (GlcNAc...) asparagine" evidence="1">
    <location>
        <position position="769"/>
    </location>
</feature>
<feature type="glycosylation site" description="N-linked (GlcNAc...) asparagine" evidence="1">
    <location>
        <position position="1015"/>
    </location>
</feature>
<name>AB15B_ARATH</name>
<proteinExistence type="inferred from homology"/>
<accession>Q9LHD1</accession>
<reference key="1">
    <citation type="journal article" date="2000" name="DNA Res.">
        <title>Structural analysis of Arabidopsis thaliana chromosome 3. II. Sequence features of the 4,251,695 bp regions covered by 90 P1, TAC and BAC clones.</title>
        <authorList>
            <person name="Kaneko T."/>
            <person name="Katoh T."/>
            <person name="Sato S."/>
            <person name="Nakamura Y."/>
            <person name="Asamizu E."/>
            <person name="Tabata S."/>
        </authorList>
    </citation>
    <scope>NUCLEOTIDE SEQUENCE [LARGE SCALE GENOMIC DNA]</scope>
    <source>
        <strain>cv. Columbia</strain>
    </source>
</reference>
<reference key="2">
    <citation type="journal article" date="2000" name="DNA Res.">
        <title>Structural analysis of Arabidopsis thaliana chromosome 3. I. Sequence features of the regions of 4,504,864 bp covered by sixty P1 and TAC clones.</title>
        <authorList>
            <person name="Sato S."/>
            <person name="Nakamura Y."/>
            <person name="Kaneko T."/>
            <person name="Katoh T."/>
            <person name="Asamizu E."/>
            <person name="Tabata S."/>
        </authorList>
    </citation>
    <scope>NUCLEOTIDE SEQUENCE [LARGE SCALE GENOMIC DNA]</scope>
    <source>
        <strain>cv. Columbia</strain>
    </source>
</reference>
<reference key="3">
    <citation type="journal article" date="2017" name="Plant J.">
        <title>Araport11: a complete reannotation of the Arabidopsis thaliana reference genome.</title>
        <authorList>
            <person name="Cheng C.Y."/>
            <person name="Krishnakumar V."/>
            <person name="Chan A.P."/>
            <person name="Thibaud-Nissen F."/>
            <person name="Schobel S."/>
            <person name="Town C.D."/>
        </authorList>
    </citation>
    <scope>GENOME REANNOTATION</scope>
    <source>
        <strain>cv. Columbia</strain>
    </source>
</reference>
<reference key="4">
    <citation type="journal article" date="2001" name="J. Biol. Chem.">
        <title>The Arabidopsis thaliana ABC protein superfamily, a complete inventory.</title>
        <authorList>
            <person name="Sanchez-Fernandez R."/>
            <person name="Davies T.G."/>
            <person name="Coleman J.O."/>
            <person name="Rea P.A."/>
        </authorList>
    </citation>
    <scope>GENE FAMILY</scope>
    <scope>NOMENCLATURE</scope>
</reference>
<reference key="5">
    <citation type="journal article" date="2008" name="Trends Plant Sci.">
        <title>Plant ABC proteins - a unified nomenclature and updated inventory.</title>
        <authorList>
            <person name="Verrier P.J."/>
            <person name="Bird D."/>
            <person name="Burla B."/>
            <person name="Dassa E."/>
            <person name="Forestier C."/>
            <person name="Geisler M."/>
            <person name="Klein M."/>
            <person name="Kolukisaoglu H.U."/>
            <person name="Lee Y."/>
            <person name="Martinoia E."/>
            <person name="Murphy A."/>
            <person name="Rea P.A."/>
            <person name="Samuels L."/>
            <person name="Schulz B."/>
            <person name="Spalding E.J."/>
            <person name="Yazaki K."/>
            <person name="Theodoulou F.L."/>
        </authorList>
    </citation>
    <scope>GENE FAMILY</scope>
    <scope>NOMENCLATURE</scope>
</reference>
<comment type="subcellular location">
    <subcellularLocation>
        <location evidence="3">Membrane</location>
        <topology evidence="3">Multi-pass membrane protein</topology>
    </subcellularLocation>
</comment>
<comment type="similarity">
    <text evidence="5">Belongs to the ABC transporter superfamily. ABCB family. Multidrug resistance exporter (TC 3.A.1.201) subfamily.</text>
</comment>
<protein>
    <recommendedName>
        <fullName>ABC transporter B family member 15</fullName>
        <shortName>ABC transporter ABCB.15</shortName>
        <shortName>AtABCB15</shortName>
    </recommendedName>
    <alternativeName>
        <fullName>Multidrug resistance protein 13</fullName>
    </alternativeName>
    <alternativeName>
        <fullName>P-glycoprotein 15</fullName>
    </alternativeName>
</protein>
<organism>
    <name type="scientific">Arabidopsis thaliana</name>
    <name type="common">Mouse-ear cress</name>
    <dbReference type="NCBI Taxonomy" id="3702"/>
    <lineage>
        <taxon>Eukaryota</taxon>
        <taxon>Viridiplantae</taxon>
        <taxon>Streptophyta</taxon>
        <taxon>Embryophyta</taxon>
        <taxon>Tracheophyta</taxon>
        <taxon>Spermatophyta</taxon>
        <taxon>Magnoliopsida</taxon>
        <taxon>eudicotyledons</taxon>
        <taxon>Gunneridae</taxon>
        <taxon>Pentapetalae</taxon>
        <taxon>rosids</taxon>
        <taxon>malvids</taxon>
        <taxon>Brassicales</taxon>
        <taxon>Brassicaceae</taxon>
        <taxon>Camelineae</taxon>
        <taxon>Arabidopsis</taxon>
    </lineage>
</organism>
<evidence type="ECO:0000255" key="1"/>
<evidence type="ECO:0000255" key="2">
    <source>
        <dbReference type="PROSITE-ProRule" id="PRU00434"/>
    </source>
</evidence>
<evidence type="ECO:0000255" key="3">
    <source>
        <dbReference type="PROSITE-ProRule" id="PRU00441"/>
    </source>
</evidence>
<evidence type="ECO:0000256" key="4">
    <source>
        <dbReference type="SAM" id="MobiDB-lite"/>
    </source>
</evidence>
<evidence type="ECO:0000305" key="5"/>
<dbReference type="EMBL" id="AP002051">
    <property type="protein sequence ID" value="BAB02627.1"/>
    <property type="molecule type" value="Genomic_DNA"/>
</dbReference>
<dbReference type="EMBL" id="AB026644">
    <property type="protein sequence ID" value="BAB02627.1"/>
    <property type="status" value="JOINED"/>
    <property type="molecule type" value="Genomic_DNA"/>
</dbReference>
<dbReference type="EMBL" id="CP002686">
    <property type="protein sequence ID" value="AEE77436.1"/>
    <property type="molecule type" value="Genomic_DNA"/>
</dbReference>
<dbReference type="RefSeq" id="NP_189475.1">
    <property type="nucleotide sequence ID" value="NM_113754.3"/>
</dbReference>
<dbReference type="SMR" id="Q9LHD1"/>
<dbReference type="BioGRID" id="7792">
    <property type="interactions" value="2"/>
</dbReference>
<dbReference type="FunCoup" id="Q9LHD1">
    <property type="interactions" value="199"/>
</dbReference>
<dbReference type="STRING" id="3702.Q9LHD1"/>
<dbReference type="TCDB" id="3.A.1.201.34">
    <property type="family name" value="the atp-binding cassette (abc) superfamily"/>
</dbReference>
<dbReference type="GlyCosmos" id="Q9LHD1">
    <property type="glycosylation" value="6 sites, No reported glycans"/>
</dbReference>
<dbReference type="GlyGen" id="Q9LHD1">
    <property type="glycosylation" value="6 sites"/>
</dbReference>
<dbReference type="iPTMnet" id="Q9LHD1"/>
<dbReference type="PaxDb" id="3702-AT3G28345.1"/>
<dbReference type="ProteomicsDB" id="244578"/>
<dbReference type="EnsemblPlants" id="AT3G28345.1">
    <property type="protein sequence ID" value="AT3G28345.1"/>
    <property type="gene ID" value="AT3G28345"/>
</dbReference>
<dbReference type="GeneID" id="822463"/>
<dbReference type="Gramene" id="AT3G28345.1">
    <property type="protein sequence ID" value="AT3G28345.1"/>
    <property type="gene ID" value="AT3G28345"/>
</dbReference>
<dbReference type="KEGG" id="ath:AT3G28345"/>
<dbReference type="Araport" id="AT3G28345"/>
<dbReference type="TAIR" id="AT3G28345">
    <property type="gene designation" value="ABCB15"/>
</dbReference>
<dbReference type="eggNOG" id="KOG0055">
    <property type="taxonomic scope" value="Eukaryota"/>
</dbReference>
<dbReference type="HOGENOM" id="CLU_000604_17_2_1"/>
<dbReference type="InParanoid" id="Q9LHD1"/>
<dbReference type="OMA" id="LTMEDTI"/>
<dbReference type="PhylomeDB" id="Q9LHD1"/>
<dbReference type="BioCyc" id="ARA:AT3G28345-MONOMER"/>
<dbReference type="PRO" id="PR:Q9LHD1"/>
<dbReference type="Proteomes" id="UP000006548">
    <property type="component" value="Chromosome 3"/>
</dbReference>
<dbReference type="ExpressionAtlas" id="Q9LHD1">
    <property type="expression patterns" value="baseline and differential"/>
</dbReference>
<dbReference type="GO" id="GO:0016020">
    <property type="term" value="C:membrane"/>
    <property type="evidence" value="ECO:0007669"/>
    <property type="project" value="UniProtKB-SubCell"/>
</dbReference>
<dbReference type="GO" id="GO:0140359">
    <property type="term" value="F:ABC-type transporter activity"/>
    <property type="evidence" value="ECO:0007669"/>
    <property type="project" value="InterPro"/>
</dbReference>
<dbReference type="GO" id="GO:0005524">
    <property type="term" value="F:ATP binding"/>
    <property type="evidence" value="ECO:0007669"/>
    <property type="project" value="UniProtKB-KW"/>
</dbReference>
<dbReference type="GO" id="GO:0016887">
    <property type="term" value="F:ATP hydrolysis activity"/>
    <property type="evidence" value="ECO:0007669"/>
    <property type="project" value="InterPro"/>
</dbReference>
<dbReference type="CDD" id="cd18577">
    <property type="entry name" value="ABC_6TM_Pgp_ABCB1_D1_like"/>
    <property type="match status" value="1"/>
</dbReference>
<dbReference type="CDD" id="cd18578">
    <property type="entry name" value="ABC_6TM_Pgp_ABCB1_D2_like"/>
    <property type="match status" value="1"/>
</dbReference>
<dbReference type="CDD" id="cd03249">
    <property type="entry name" value="ABC_MTABC3_MDL1_MDL2"/>
    <property type="match status" value="2"/>
</dbReference>
<dbReference type="FunFam" id="1.20.1560.10:FF:000029">
    <property type="entry name" value="ABC transporter B family member 1"/>
    <property type="match status" value="1"/>
</dbReference>
<dbReference type="FunFam" id="3.40.50.300:FF:000205">
    <property type="entry name" value="ABC transporter B family member 4"/>
    <property type="match status" value="2"/>
</dbReference>
<dbReference type="FunFam" id="1.20.1560.10:FF:000126">
    <property type="entry name" value="Putative ABC transporter B family member 8"/>
    <property type="match status" value="1"/>
</dbReference>
<dbReference type="Gene3D" id="1.20.1560.10">
    <property type="entry name" value="ABC transporter type 1, transmembrane domain"/>
    <property type="match status" value="1"/>
</dbReference>
<dbReference type="Gene3D" id="3.40.50.300">
    <property type="entry name" value="P-loop containing nucleotide triphosphate hydrolases"/>
    <property type="match status" value="2"/>
</dbReference>
<dbReference type="InterPro" id="IPR003593">
    <property type="entry name" value="AAA+_ATPase"/>
</dbReference>
<dbReference type="InterPro" id="IPR011527">
    <property type="entry name" value="ABC1_TM_dom"/>
</dbReference>
<dbReference type="InterPro" id="IPR036640">
    <property type="entry name" value="ABC1_TM_sf"/>
</dbReference>
<dbReference type="InterPro" id="IPR003439">
    <property type="entry name" value="ABC_transporter-like_ATP-bd"/>
</dbReference>
<dbReference type="InterPro" id="IPR017871">
    <property type="entry name" value="ABC_transporter-like_CS"/>
</dbReference>
<dbReference type="InterPro" id="IPR027417">
    <property type="entry name" value="P-loop_NTPase"/>
</dbReference>
<dbReference type="PANTHER" id="PTHR45136">
    <property type="entry name" value="ABC TRANSPORTER DOMAIN-CONTAINING PROTEIN"/>
    <property type="match status" value="1"/>
</dbReference>
<dbReference type="PANTHER" id="PTHR45136:SF2">
    <property type="entry name" value="ABC TRANSPORTER DOMAIN-CONTAINING PROTEIN"/>
    <property type="match status" value="1"/>
</dbReference>
<dbReference type="Pfam" id="PF00664">
    <property type="entry name" value="ABC_membrane"/>
    <property type="match status" value="2"/>
</dbReference>
<dbReference type="Pfam" id="PF00005">
    <property type="entry name" value="ABC_tran"/>
    <property type="match status" value="2"/>
</dbReference>
<dbReference type="SMART" id="SM00382">
    <property type="entry name" value="AAA"/>
    <property type="match status" value="2"/>
</dbReference>
<dbReference type="SUPFAM" id="SSF90123">
    <property type="entry name" value="ABC transporter transmembrane region"/>
    <property type="match status" value="2"/>
</dbReference>
<dbReference type="SUPFAM" id="SSF52540">
    <property type="entry name" value="P-loop containing nucleoside triphosphate hydrolases"/>
    <property type="match status" value="2"/>
</dbReference>
<dbReference type="PROSITE" id="PS50929">
    <property type="entry name" value="ABC_TM1F"/>
    <property type="match status" value="2"/>
</dbReference>
<dbReference type="PROSITE" id="PS00211">
    <property type="entry name" value="ABC_TRANSPORTER_1"/>
    <property type="match status" value="2"/>
</dbReference>
<dbReference type="PROSITE" id="PS50893">
    <property type="entry name" value="ABC_TRANSPORTER_2"/>
    <property type="match status" value="2"/>
</dbReference>
<gene>
    <name type="primary">ABCB15</name>
    <name type="synonym">MDR13</name>
    <name type="synonym">PGP15</name>
    <name type="ordered locus">At3g28345</name>
    <name type="ORF">MZF16.16</name>
</gene>
<sequence length="1240" mass="135641">MGKEEEKESGRNKMNCFGSVRSIFMHADGVDWLLMGLGLIGAVGDGFTTPLVLLITSKLMNNIGGSSFNTDTFMQSISKNSVALLYVACGSWVVCFLEGYCWTRTGERQTARMREKYLRAVLRQDVGYFDLHVTSTSDVITSVSSDSFVIQDVLSEKLPNFLMSASTFVGSYIVGFILLWRLAIVGLPFIVLLVIPGLMYGRALISISRKIREEYNEAGFVAEQAISSVRTVYAFSGERKTISKFSTALQGSVKLGIKQGLAKGITIGSNGITFAMWGFMSWYGSRMVMYHGAQGGTVFAVAAAIAIGGVSLGGGLSNLKYFFEAASVGERIMEVINRVPKIDSDNPDGHKLEKIRGEVEFKNVKFVYPSRLETSIFDDFCLRVPSGKTVALVGGSGSGKSTVISLLQRFYDPLAGEILIDGVSIDKLQVKWLRSQMGLVSQEPALFATTIKENILFGKEDASMDDVVEAAKASNAHNFISQLPNGYETQVGERGVQMSGGQKQRIAIARAIIKSPTILLLDEATSALDSESERVVQEALENASIGRTTILIAHRLSTIRNADVISVVKNGHIVETGSHDELMENIDGQYSTLVHLQQIEKQDINVSVKIGPISDPSKDIRNSSRVSTLSRSSSANSVTGPSTIKNLSEDNKPQLPSFKRLLAMNLPEWKQALYGCISATLFGAIQPAYAYSLGSMVSVYFLTSHDEIKEKTRIYALSFVGLAVLSFLINISQHYNFAYMGEYLTKRIRERMLSKVLTFEVGWFDRDENSSGAICSRLAKDANVVRSLVGDRMALVVQTVSAVTIAFTMGLVIAWRLALVMIAVQPVIIVCFYTRRVLLKSMSKKAIKAQDESSKLAAEAVSNVRTITAFSSQERIMKMLEKAQESPRRESIRQSWFAGFGLAMSQSLTSCTWALDFWYGGRLIQDGYITAKALFETFMILVSTGRVIADAGSMTTDLAKGSDAVGSVFAVLDRYTSIDPEDPDGYETERITGQVEFLDVDFSYPTRPDVIIFKNFSIKIEEGKSTAIVGPSGSGKSTIIGLIERFYDPLKGIVKIDGRDIRSYHLRSLRRHIALVSQEPTLFAGTIRENIIYGGVSDKIDEAEIIEAAKAANAHDFITSLTEGYDTYCGDRGVQLSGGQKQRIAIARAVLKNPSVLLLDEATSALDSQSERVVQDALERVMVGRTSVVIAHRLSTIQNCDAIAVLDKGKLVERGTHSSLLSKGPTGIYFSLVSLQTTSG</sequence>